<evidence type="ECO:0000256" key="1">
    <source>
        <dbReference type="SAM" id="MobiDB-lite"/>
    </source>
</evidence>
<evidence type="ECO:0000269" key="2">
    <source>
    </source>
</evidence>
<evidence type="ECO:0000269" key="3">
    <source>
    </source>
</evidence>
<evidence type="ECO:0000269" key="4">
    <source>
    </source>
</evidence>
<evidence type="ECO:0000303" key="5">
    <source>
    </source>
</evidence>
<evidence type="ECO:0000303" key="6">
    <source>
    </source>
</evidence>
<evidence type="ECO:0000305" key="7"/>
<evidence type="ECO:0007744" key="8">
    <source>
        <dbReference type="PDB" id="6MHY"/>
    </source>
</evidence>
<evidence type="ECO:0007829" key="9">
    <source>
        <dbReference type="PDB" id="7JJP"/>
    </source>
</evidence>
<evidence type="ECO:0007829" key="10">
    <source>
        <dbReference type="PDB" id="7JLW"/>
    </source>
</evidence>
<dbReference type="EMBL" id="AF177913">
    <property type="protein sequence ID" value="AAF01367.1"/>
    <property type="molecule type" value="Genomic_DNA"/>
</dbReference>
<dbReference type="RefSeq" id="NP_001123510.1">
    <property type="nucleotide sequence ID" value="NM_001130038.1"/>
</dbReference>
<dbReference type="PDB" id="6MHY">
    <property type="method" value="EM"/>
    <property type="resolution" value="3.40 A"/>
    <property type="chains" value="A/B/C/D/E/F/G/H/I/J/K/L=2-440"/>
</dbReference>
<dbReference type="PDB" id="7JJP">
    <property type="method" value="EM"/>
    <property type="resolution" value="1.94 A"/>
    <property type="chains" value="A/B/C/D/E/F/G/H/I/J/K/L=1-440"/>
</dbReference>
<dbReference type="PDB" id="7JLW">
    <property type="method" value="EM"/>
    <property type="resolution" value="2.50 A"/>
    <property type="chains" value="A/B/C/D/E/F/G/H/I/J/K/L=1-440"/>
</dbReference>
<dbReference type="PDB" id="7JM9">
    <property type="method" value="EM"/>
    <property type="resolution" value="2.50 A"/>
    <property type="chains" value="A/B/C/D/E/F/G/H/I/J/K/L=1-440"/>
</dbReference>
<dbReference type="PDB" id="7JMC">
    <property type="method" value="EM"/>
    <property type="resolution" value="2.50 A"/>
    <property type="chains" value="A/B/C/D/E/F/G/H/I/J/K/L=1-440"/>
</dbReference>
<dbReference type="PDBsum" id="6MHY"/>
<dbReference type="PDBsum" id="7JJP"/>
<dbReference type="PDBsum" id="7JLW"/>
<dbReference type="PDBsum" id="7JM9"/>
<dbReference type="PDBsum" id="7JMC"/>
<dbReference type="EMDB" id="EMD-22358"/>
<dbReference type="EMDB" id="EMD-22382"/>
<dbReference type="EMDB" id="EMD-22390"/>
<dbReference type="EMDB" id="EMD-22391"/>
<dbReference type="SMR" id="P55917"/>
<dbReference type="IntAct" id="P55917">
    <property type="interactions" value="1"/>
</dbReference>
<dbReference type="STRING" id="9940.ENSOARP00000013175"/>
<dbReference type="PaxDb" id="9940-ENSOARP00000013175"/>
<dbReference type="Ensembl" id="ENSOART00180019452">
    <property type="protein sequence ID" value="ENSOARP00180010008"/>
    <property type="gene ID" value="ENSOARG00180011875"/>
</dbReference>
<dbReference type="Ensembl" id="ENSOART00220087648">
    <property type="protein sequence ID" value="ENSOARP00220046866"/>
    <property type="gene ID" value="ENSOARG00220052952"/>
</dbReference>
<dbReference type="Ensembl" id="ENSOART00225072404">
    <property type="protein sequence ID" value="ENSOARP00225036925"/>
    <property type="gene ID" value="ENSOARG00225043699"/>
</dbReference>
<dbReference type="GeneID" id="100170231"/>
<dbReference type="KEGG" id="oas:100170231"/>
<dbReference type="CTD" id="2703"/>
<dbReference type="eggNOG" id="ENOG502QV1K">
    <property type="taxonomic scope" value="Eukaryota"/>
</dbReference>
<dbReference type="OrthoDB" id="9941830at2759"/>
<dbReference type="Proteomes" id="UP000002356">
    <property type="component" value="Unplaced"/>
</dbReference>
<dbReference type="GO" id="GO:0005922">
    <property type="term" value="C:connexin complex"/>
    <property type="evidence" value="ECO:0000314"/>
    <property type="project" value="UniProtKB"/>
</dbReference>
<dbReference type="GO" id="GO:0005886">
    <property type="term" value="C:plasma membrane"/>
    <property type="evidence" value="ECO:0000314"/>
    <property type="project" value="UniProtKB"/>
</dbReference>
<dbReference type="GO" id="GO:0005243">
    <property type="term" value="F:gap junction channel activity"/>
    <property type="evidence" value="ECO:0000250"/>
    <property type="project" value="UniProtKB"/>
</dbReference>
<dbReference type="GO" id="GO:0007267">
    <property type="term" value="P:cell-cell signaling"/>
    <property type="evidence" value="ECO:0007669"/>
    <property type="project" value="TreeGrafter"/>
</dbReference>
<dbReference type="GO" id="GO:1990349">
    <property type="term" value="P:gap junction-mediated intercellular transport"/>
    <property type="evidence" value="ECO:0000250"/>
    <property type="project" value="UniProtKB"/>
</dbReference>
<dbReference type="FunFam" id="1.20.1440.80:FF:000002">
    <property type="entry name" value="Gap junction protein"/>
    <property type="match status" value="1"/>
</dbReference>
<dbReference type="Gene3D" id="1.20.1440.80">
    <property type="entry name" value="Gap junction channel protein cysteine-rich domain"/>
    <property type="match status" value="1"/>
</dbReference>
<dbReference type="InterPro" id="IPR000500">
    <property type="entry name" value="Connexin"/>
</dbReference>
<dbReference type="InterPro" id="IPR002266">
    <property type="entry name" value="Connexin50"/>
</dbReference>
<dbReference type="InterPro" id="IPR019570">
    <property type="entry name" value="Connexin_CCC"/>
</dbReference>
<dbReference type="InterPro" id="IPR017990">
    <property type="entry name" value="Connexin_CS"/>
</dbReference>
<dbReference type="InterPro" id="IPR013092">
    <property type="entry name" value="Connexin_N"/>
</dbReference>
<dbReference type="InterPro" id="IPR038359">
    <property type="entry name" value="Connexin_N_sf"/>
</dbReference>
<dbReference type="PANTHER" id="PTHR11984">
    <property type="entry name" value="CONNEXIN"/>
    <property type="match status" value="1"/>
</dbReference>
<dbReference type="PANTHER" id="PTHR11984:SF19">
    <property type="entry name" value="GAP JUNCTION ALPHA-8 PROTEIN"/>
    <property type="match status" value="1"/>
</dbReference>
<dbReference type="Pfam" id="PF00029">
    <property type="entry name" value="Connexin"/>
    <property type="match status" value="1"/>
</dbReference>
<dbReference type="Pfam" id="PF03509">
    <property type="entry name" value="Connexin50"/>
    <property type="match status" value="1"/>
</dbReference>
<dbReference type="PRINTS" id="PR00206">
    <property type="entry name" value="CONNEXIN"/>
</dbReference>
<dbReference type="PRINTS" id="PR01137">
    <property type="entry name" value="CONNEXINA8"/>
</dbReference>
<dbReference type="SMART" id="SM00037">
    <property type="entry name" value="CNX"/>
    <property type="match status" value="1"/>
</dbReference>
<dbReference type="SMART" id="SM01089">
    <property type="entry name" value="Connexin_CCC"/>
    <property type="match status" value="1"/>
</dbReference>
<dbReference type="PROSITE" id="PS00407">
    <property type="entry name" value="CONNEXINS_1"/>
    <property type="match status" value="1"/>
</dbReference>
<dbReference type="PROSITE" id="PS00408">
    <property type="entry name" value="CONNEXINS_2"/>
    <property type="match status" value="1"/>
</dbReference>
<reference key="1">
    <citation type="journal article" date="1996" name="Curr. Eye Res.">
        <title>Molecular cloning of sheep connexin49 and its identity with MP70.</title>
        <authorList>
            <person name="Yang D.-I."/>
            <person name="Louis C.F."/>
        </authorList>
    </citation>
    <scope>NUCLEOTIDE SEQUENCE [GENOMIC DNA]</scope>
    <scope>TISSUE SPECIFICITY</scope>
</reference>
<reference key="2">
    <citation type="submission" date="1999-08" db="EMBL/GenBank/DDBJ databases">
        <authorList>
            <person name="Yang D.-I."/>
            <person name="Louis C.F."/>
        </authorList>
    </citation>
    <scope>NUCLEOTIDE SEQUENCE [GENOMIC DNA]</scope>
</reference>
<reference key="3">
    <citation type="journal article" date="1988" name="Nature">
        <title>Homologies between gap junction proteins in lens, heart and liver.</title>
        <authorList>
            <person name="Kistler J."/>
            <person name="Christie D."/>
            <person name="Bullivant S."/>
        </authorList>
    </citation>
    <scope>PROTEIN SEQUENCE OF 2-21</scope>
    <source>
        <tissue>Lens</tissue>
    </source>
</reference>
<reference key="4">
    <citation type="journal article" date="2018" name="Nature">
        <title>Structure of native lens connexin 46/50 intercellular channels by cryo-EM.</title>
        <authorList>
            <person name="Myers J.B."/>
            <person name="Haddad B.G."/>
            <person name="O'Neill S.E."/>
            <person name="Chorev D.S."/>
            <person name="Yoshioka C.C."/>
            <person name="Robinson C.V."/>
            <person name="Zuckerman D.M."/>
            <person name="Reichow S.L."/>
        </authorList>
    </citation>
    <scope>STRUCTURE BY ELECTRON MICROSCOPY (3.40 ANGSTROMS)</scope>
    <scope>FUNCTION</scope>
    <scope>SUBCELLULAR LOCATION</scope>
    <scope>TOPOLOGY</scope>
    <scope>SUBUNIT</scope>
    <scope>TISSUE SPECIFICITY</scope>
    <scope>IDENTIFICATION BY MASS SPECTROMETRY</scope>
    <scope>DISULFIDE BONDS</scope>
    <scope>PARTIAL PROTEIN SEQUENCE</scope>
</reference>
<proteinExistence type="evidence at protein level"/>
<organism>
    <name type="scientific">Ovis aries</name>
    <name type="common">Sheep</name>
    <dbReference type="NCBI Taxonomy" id="9940"/>
    <lineage>
        <taxon>Eukaryota</taxon>
        <taxon>Metazoa</taxon>
        <taxon>Chordata</taxon>
        <taxon>Craniata</taxon>
        <taxon>Vertebrata</taxon>
        <taxon>Euteleostomi</taxon>
        <taxon>Mammalia</taxon>
        <taxon>Eutheria</taxon>
        <taxon>Laurasiatheria</taxon>
        <taxon>Artiodactyla</taxon>
        <taxon>Ruminantia</taxon>
        <taxon>Pecora</taxon>
        <taxon>Bovidae</taxon>
        <taxon>Caprinae</taxon>
        <taxon>Ovis</taxon>
    </lineage>
</organism>
<keyword id="KW-0002">3D-structure</keyword>
<keyword id="KW-0965">Cell junction</keyword>
<keyword id="KW-1003">Cell membrane</keyword>
<keyword id="KW-0903">Direct protein sequencing</keyword>
<keyword id="KW-1015">Disulfide bond</keyword>
<keyword id="KW-0303">Gap junction</keyword>
<keyword id="KW-0472">Membrane</keyword>
<keyword id="KW-1185">Reference proteome</keyword>
<keyword id="KW-0812">Transmembrane</keyword>
<keyword id="KW-1133">Transmembrane helix</keyword>
<name>CXA8_SHEEP</name>
<gene>
    <name type="primary">GJA8</name>
</gene>
<accession>P55917</accession>
<accession>Q9MYL3</accession>
<sequence>MGDWSFLGNILEEVNEHSTVIGRVWLTVLFIFRILILGTAAEFVWGDEQSDFVCNTQQPGCENVCYDEAFPISHIRLWVLQIIFVSTPSLVYVGHAVHHVRMEEKRKEREAEELSQQSPGNGGERAPLAADQGSVKKSSSSSKGTKKFRLEGTLLRTYVCHIIFKTLFEVGFIVGHYFLYGFRILPLYRCSRWPCPNVVDCFVSRPTEKTIFILFMLSVASVSLFLNILEMSHLGLKKIRSAFKRPVEQPLGEIPEKSLHSIAVSSIQKAKGYQLLEEEKIVSHYFPLTEVGMVEASPLSAKPFSQFEEKVGPGPLGDLSRAYQETLPSYAQVGAQEGVEEEQPIEAAAEPEVGDKSQEAERVSTEGEETLAVLEEEKVEPPEVEKEAEKEETPPEKVSKQELTPEKAPSLCAELPGEDTRPLSRLSKASSRARSDDLTV</sequence>
<comment type="function">
    <text evidence="3">Structural component of eye lens gap junctions. Gap junctions are dodecameric channels that connect the cytoplasm of adjoining cells. They are formed by the docking of two hexameric hemichannels, one from each cell membrane. Small molecules and ions diffuse from one cell to a neighboring cell via the central pore.</text>
</comment>
<comment type="subunit">
    <text evidence="3">A hemichannel or connexon is composed of a hexamer of connexins. A functional gap junction is formed by the apposition of two hemichannels (PubMed:30542154). Forms heteromeric channels with GJA3 (PubMed:30542154).</text>
</comment>
<comment type="interaction">
    <interactant intactId="EBI-21347179">
        <id>P55917</id>
    </interactant>
    <interactant intactId="EBI-21347162">
        <id>Q9TU17</id>
        <label>GJA3</label>
    </interactant>
    <organismsDiffer>false</organismsDiffer>
    <experiments>2</experiments>
</comment>
<comment type="subcellular location">
    <subcellularLocation>
        <location evidence="3">Cell membrane</location>
        <topology evidence="3">Multi-pass membrane protein</topology>
    </subcellularLocation>
    <subcellularLocation>
        <location evidence="3">Cell junction</location>
        <location evidence="3">Gap junction</location>
    </subcellularLocation>
</comment>
<comment type="tissue specificity">
    <text evidence="3 4">Detected in eye lens (at protein level) (PubMed:30542154). Eye lens (PubMed:8654111).</text>
</comment>
<comment type="similarity">
    <text evidence="7">Belongs to the connexin family. Alpha-type (group II) subfamily.</text>
</comment>
<feature type="initiator methionine" description="Removed" evidence="2 3">
    <location>
        <position position="1"/>
    </location>
</feature>
<feature type="chain" id="PRO_0000057832" description="Gap junction alpha-8 protein">
    <location>
        <begin position="2"/>
        <end position="440"/>
    </location>
</feature>
<feature type="intramembrane region" evidence="3">
    <location>
        <begin position="2"/>
        <end position="12"/>
    </location>
</feature>
<feature type="topological domain" description="Cytoplasmic" evidence="3">
    <location>
        <begin position="13"/>
        <end position="21"/>
    </location>
</feature>
<feature type="transmembrane region" description="Helical" evidence="3">
    <location>
        <begin position="22"/>
        <end position="42"/>
    </location>
</feature>
<feature type="topological domain" description="Extracellular" evidence="3">
    <location>
        <begin position="43"/>
        <end position="71"/>
    </location>
</feature>
<feature type="transmembrane region" description="Helical" evidence="3">
    <location>
        <begin position="72"/>
        <end position="92"/>
    </location>
</feature>
<feature type="topological domain" description="Cytoplasmic" evidence="3">
    <location>
        <begin position="93"/>
        <end position="161"/>
    </location>
</feature>
<feature type="transmembrane region" description="Helical" evidence="3">
    <location>
        <begin position="162"/>
        <end position="182"/>
    </location>
</feature>
<feature type="topological domain" description="Extracellular" evidence="3">
    <location>
        <begin position="183"/>
        <end position="210"/>
    </location>
</feature>
<feature type="transmembrane region" description="Helical" evidence="3">
    <location>
        <begin position="211"/>
        <end position="231"/>
    </location>
</feature>
<feature type="topological domain" description="Cytoplasmic" evidence="3">
    <location>
        <begin position="232"/>
        <end position="440"/>
    </location>
</feature>
<feature type="region of interest" description="Disordered" evidence="1">
    <location>
        <begin position="108"/>
        <end position="144"/>
    </location>
</feature>
<feature type="region of interest" description="Disordered" evidence="1">
    <location>
        <begin position="334"/>
        <end position="440"/>
    </location>
</feature>
<feature type="compositionally biased region" description="Basic and acidic residues" evidence="1">
    <location>
        <begin position="353"/>
        <end position="365"/>
    </location>
</feature>
<feature type="compositionally biased region" description="Basic and acidic residues" evidence="1">
    <location>
        <begin position="375"/>
        <end position="405"/>
    </location>
</feature>
<feature type="compositionally biased region" description="Low complexity" evidence="1">
    <location>
        <begin position="423"/>
        <end position="432"/>
    </location>
</feature>
<feature type="disulfide bond" evidence="3 8">
    <location>
        <begin position="54"/>
        <end position="201"/>
    </location>
</feature>
<feature type="disulfide bond" evidence="3 8">
    <location>
        <begin position="61"/>
        <end position="195"/>
    </location>
</feature>
<feature type="disulfide bond" evidence="3 8">
    <location>
        <begin position="65"/>
        <end position="190"/>
    </location>
</feature>
<feature type="sequence variant">
    <original>N</original>
    <variation>R</variation>
    <location>
        <position position="9"/>
    </location>
</feature>
<feature type="sequence variant">
    <original>I</original>
    <variation>L</variation>
    <location>
        <position position="10"/>
    </location>
</feature>
<feature type="sequence variant">
    <original>V</original>
    <variation>A</variation>
    <location>
        <position position="14"/>
    </location>
</feature>
<feature type="sequence conflict" description="In Ref. 3; AA sequence." evidence="7" ref="3">
    <original>E</original>
    <variation>N</variation>
    <location>
        <position position="13"/>
    </location>
</feature>
<feature type="sequence conflict" description="In Ref. 3; AA sequence." evidence="7" ref="3">
    <original>N</original>
    <variation>Q</variation>
    <location>
        <position position="15"/>
    </location>
</feature>
<feature type="sequence conflict" description="In Ref. 2; AAF01367." evidence="7" ref="2">
    <original>E</original>
    <variation>D</variation>
    <location>
        <position position="42"/>
    </location>
</feature>
<feature type="helix" evidence="9">
    <location>
        <begin position="5"/>
        <end position="15"/>
    </location>
</feature>
<feature type="helix" evidence="9">
    <location>
        <begin position="20"/>
        <end position="32"/>
    </location>
</feature>
<feature type="helix" evidence="9">
    <location>
        <begin position="34"/>
        <end position="39"/>
    </location>
</feature>
<feature type="helix" evidence="9">
    <location>
        <begin position="41"/>
        <end position="44"/>
    </location>
</feature>
<feature type="turn" evidence="9">
    <location>
        <begin position="45"/>
        <end position="51"/>
    </location>
</feature>
<feature type="strand" evidence="9">
    <location>
        <begin position="53"/>
        <end position="55"/>
    </location>
</feature>
<feature type="helix" evidence="9">
    <location>
        <begin position="61"/>
        <end position="69"/>
    </location>
</feature>
<feature type="helix" evidence="9">
    <location>
        <begin position="74"/>
        <end position="108"/>
    </location>
</feature>
<feature type="helix" evidence="9">
    <location>
        <begin position="153"/>
        <end position="180"/>
    </location>
</feature>
<feature type="strand" evidence="9">
    <location>
        <begin position="186"/>
        <end position="190"/>
    </location>
</feature>
<feature type="strand" evidence="10">
    <location>
        <begin position="195"/>
        <end position="197"/>
    </location>
</feature>
<feature type="strand" evidence="9">
    <location>
        <begin position="199"/>
        <end position="202"/>
    </location>
</feature>
<feature type="helix" evidence="9">
    <location>
        <begin position="206"/>
        <end position="235"/>
    </location>
</feature>
<protein>
    <recommendedName>
        <fullName>Gap junction alpha-8 protein</fullName>
    </recommendedName>
    <alternativeName>
        <fullName evidence="6">Connexin-49</fullName>
        <shortName evidence="5">Cx49</shortName>
    </alternativeName>
    <alternativeName>
        <fullName evidence="6">Lens fiber protein MP70</fullName>
    </alternativeName>
    <alternativeName>
        <fullName>MP38</fullName>
    </alternativeName>
    <alternativeName>
        <fullName>MP64</fullName>
    </alternativeName>
</protein>